<proteinExistence type="inferred from homology"/>
<sequence length="362" mass="37438">MRDETPEQPAPLRFGYTTGSCATATSLAAARLLLAGQADDAVEIVLPKGQRVMMRLEFCRATADGAEAGTIKDAGDDPDVTHGALIFARVALAAAPGVRFHAGPGVGTVTRAGLTLPVGEPAINPVPRQMMTTHLEALAAEHGYAGGFDVTIGVEGGEALALKTMNPRLGIVGGLSILGTTGIVRPFSCSAYIASIHQGIDVARANGIAHIAACTGNASEDAMRAHYQLPDMALIEMGDFAGAVLKHLRRAPVARLSMCGGFGKLSKLAAGHLDLHSRHSSIDLPLLAQWAAEAGANEALQAAMRAANTSQEALKLAQADGVPLGDLVCAHALRVARDIVPPSVAVEMFAIDRQGRFVGAAR</sequence>
<organism>
    <name type="scientific">Burkholderia cenocepacia (strain HI2424)</name>
    <dbReference type="NCBI Taxonomy" id="331272"/>
    <lineage>
        <taxon>Bacteria</taxon>
        <taxon>Pseudomonadati</taxon>
        <taxon>Pseudomonadota</taxon>
        <taxon>Betaproteobacteria</taxon>
        <taxon>Burkholderiales</taxon>
        <taxon>Burkholderiaceae</taxon>
        <taxon>Burkholderia</taxon>
        <taxon>Burkholderia cepacia complex</taxon>
    </lineage>
</organism>
<feature type="chain" id="PRO_1000046850" description="Cobalt-precorrin-5B C(1)-methyltransferase">
    <location>
        <begin position="1"/>
        <end position="362"/>
    </location>
</feature>
<gene>
    <name evidence="1" type="primary">cbiD</name>
    <name type="ordered locus">Bcen2424_1676</name>
</gene>
<reference key="1">
    <citation type="submission" date="2006-08" db="EMBL/GenBank/DDBJ databases">
        <title>Complete sequence of chromosome 1 of Burkholderia cenocepacia HI2424.</title>
        <authorList>
            <person name="Copeland A."/>
            <person name="Lucas S."/>
            <person name="Lapidus A."/>
            <person name="Barry K."/>
            <person name="Detter J.C."/>
            <person name="Glavina del Rio T."/>
            <person name="Hammon N."/>
            <person name="Israni S."/>
            <person name="Pitluck S."/>
            <person name="Chain P."/>
            <person name="Malfatti S."/>
            <person name="Shin M."/>
            <person name="Vergez L."/>
            <person name="Schmutz J."/>
            <person name="Larimer F."/>
            <person name="Land M."/>
            <person name="Hauser L."/>
            <person name="Kyrpides N."/>
            <person name="Kim E."/>
            <person name="LiPuma J.J."/>
            <person name="Gonzalez C.F."/>
            <person name="Konstantinidis K."/>
            <person name="Tiedje J.M."/>
            <person name="Richardson P."/>
        </authorList>
    </citation>
    <scope>NUCLEOTIDE SEQUENCE [LARGE SCALE GENOMIC DNA]</scope>
    <source>
        <strain>HI2424</strain>
    </source>
</reference>
<comment type="function">
    <text evidence="1">Catalyzes the methylation of C-1 in cobalt-precorrin-5B to form cobalt-precorrin-6A.</text>
</comment>
<comment type="catalytic activity">
    <reaction evidence="1">
        <text>Co-precorrin-5B + S-adenosyl-L-methionine = Co-precorrin-6A + S-adenosyl-L-homocysteine</text>
        <dbReference type="Rhea" id="RHEA:26285"/>
        <dbReference type="ChEBI" id="CHEBI:57856"/>
        <dbReference type="ChEBI" id="CHEBI:59789"/>
        <dbReference type="ChEBI" id="CHEBI:60063"/>
        <dbReference type="ChEBI" id="CHEBI:60064"/>
        <dbReference type="EC" id="2.1.1.195"/>
    </reaction>
</comment>
<comment type="pathway">
    <text evidence="1">Cofactor biosynthesis; adenosylcobalamin biosynthesis; cob(II)yrinate a,c-diamide from sirohydrochlorin (anaerobic route): step 6/10.</text>
</comment>
<comment type="similarity">
    <text evidence="1">Belongs to the CbiD family.</text>
</comment>
<dbReference type="EC" id="2.1.1.195" evidence="1"/>
<dbReference type="EMBL" id="CP000458">
    <property type="protein sequence ID" value="ABK08428.1"/>
    <property type="molecule type" value="Genomic_DNA"/>
</dbReference>
<dbReference type="RefSeq" id="WP_011545411.1">
    <property type="nucleotide sequence ID" value="NC_008542.1"/>
</dbReference>
<dbReference type="SMR" id="A0K7F1"/>
<dbReference type="KEGG" id="bch:Bcen2424_1676"/>
<dbReference type="HOGENOM" id="CLU_041273_0_0_4"/>
<dbReference type="UniPathway" id="UPA00148">
    <property type="reaction ID" value="UER00227"/>
</dbReference>
<dbReference type="GO" id="GO:0043780">
    <property type="term" value="F:cobalt-precorrin-5B C1-methyltransferase activity"/>
    <property type="evidence" value="ECO:0007669"/>
    <property type="project" value="RHEA"/>
</dbReference>
<dbReference type="GO" id="GO:0019251">
    <property type="term" value="P:anaerobic cobalamin biosynthetic process"/>
    <property type="evidence" value="ECO:0007669"/>
    <property type="project" value="UniProtKB-UniRule"/>
</dbReference>
<dbReference type="GO" id="GO:0032259">
    <property type="term" value="P:methylation"/>
    <property type="evidence" value="ECO:0007669"/>
    <property type="project" value="UniProtKB-KW"/>
</dbReference>
<dbReference type="Gene3D" id="3.30.2110.10">
    <property type="entry name" value="CbiD-like"/>
    <property type="match status" value="1"/>
</dbReference>
<dbReference type="HAMAP" id="MF_00787">
    <property type="entry name" value="CbiD"/>
    <property type="match status" value="1"/>
</dbReference>
<dbReference type="InterPro" id="IPR002748">
    <property type="entry name" value="CbiD"/>
</dbReference>
<dbReference type="InterPro" id="IPR036074">
    <property type="entry name" value="CbiD_sf"/>
</dbReference>
<dbReference type="NCBIfam" id="TIGR00312">
    <property type="entry name" value="cbiD"/>
    <property type="match status" value="1"/>
</dbReference>
<dbReference type="NCBIfam" id="NF000849">
    <property type="entry name" value="PRK00075.1-1"/>
    <property type="match status" value="1"/>
</dbReference>
<dbReference type="PANTHER" id="PTHR35863">
    <property type="entry name" value="COBALT-PRECORRIN-5B C(1)-METHYLTRANSFERASE"/>
    <property type="match status" value="1"/>
</dbReference>
<dbReference type="PANTHER" id="PTHR35863:SF1">
    <property type="entry name" value="COBALT-PRECORRIN-5B C(1)-METHYLTRANSFERASE"/>
    <property type="match status" value="1"/>
</dbReference>
<dbReference type="Pfam" id="PF01888">
    <property type="entry name" value="CbiD"/>
    <property type="match status" value="1"/>
</dbReference>
<dbReference type="PIRSF" id="PIRSF026782">
    <property type="entry name" value="CbiD"/>
    <property type="match status" value="1"/>
</dbReference>
<dbReference type="SUPFAM" id="SSF111342">
    <property type="entry name" value="CbiD-like"/>
    <property type="match status" value="1"/>
</dbReference>
<name>CBID_BURCH</name>
<accession>A0K7F1</accession>
<protein>
    <recommendedName>
        <fullName evidence="1">Cobalt-precorrin-5B C(1)-methyltransferase</fullName>
        <ecNumber evidence="1">2.1.1.195</ecNumber>
    </recommendedName>
    <alternativeName>
        <fullName evidence="1">Cobalt-precorrin-6A synthase</fullName>
    </alternativeName>
</protein>
<evidence type="ECO:0000255" key="1">
    <source>
        <dbReference type="HAMAP-Rule" id="MF_00787"/>
    </source>
</evidence>
<keyword id="KW-0169">Cobalamin biosynthesis</keyword>
<keyword id="KW-0489">Methyltransferase</keyword>
<keyword id="KW-0949">S-adenosyl-L-methionine</keyword>
<keyword id="KW-0808">Transferase</keyword>